<comment type="function">
    <text evidence="5">Mg(2+)-dependent phosphatase that catalyzes the hydrolysis of the 1-position phosphate from inositol 1,4-bisphosphate and inositol 1,3,4-trisphosphate and participates in inositol phosphate metabolism.</text>
</comment>
<comment type="catalytic activity">
    <reaction evidence="5">
        <text>1D-myo-inositol 1,4-bisphosphate + H2O = 1D-myo-inositol 4-phosphate + phosphate</text>
        <dbReference type="Rhea" id="RHEA:15553"/>
        <dbReference type="ChEBI" id="CHEBI:15377"/>
        <dbReference type="ChEBI" id="CHEBI:43474"/>
        <dbReference type="ChEBI" id="CHEBI:58282"/>
        <dbReference type="ChEBI" id="CHEBI:58469"/>
        <dbReference type="EC" id="3.1.3.57"/>
    </reaction>
    <physiologicalReaction direction="left-to-right" evidence="8">
        <dbReference type="Rhea" id="RHEA:15554"/>
    </physiologicalReaction>
</comment>
<comment type="catalytic activity">
    <reaction evidence="5">
        <text>1D-myo-inositol 1,3,4-trisphosphate + H2O = 1D-myo-inositol 3,4-bisphosphate + phosphate</text>
        <dbReference type="Rhea" id="RHEA:70319"/>
        <dbReference type="ChEBI" id="CHEBI:15377"/>
        <dbReference type="ChEBI" id="CHEBI:43474"/>
        <dbReference type="ChEBI" id="CHEBI:58414"/>
        <dbReference type="ChEBI" id="CHEBI:83241"/>
    </reaction>
    <physiologicalReaction direction="left-to-right" evidence="8">
        <dbReference type="Rhea" id="RHEA:70320"/>
    </physiologicalReaction>
</comment>
<comment type="cofactor">
    <cofactor evidence="4">
        <name>Mg(2+)</name>
        <dbReference type="ChEBI" id="CHEBI:18420"/>
    </cofactor>
</comment>
<comment type="activity regulation">
    <text evidence="3 5">Inhibited by Li(+).</text>
</comment>
<comment type="biophysicochemical properties">
    <kinetics>
        <KM evidence="5">5.85 uM for 1D-myo-inositol 1,4-bisphosphate</KM>
        <KM evidence="5">30.7 uM for 1D-myo-inositol 1,3,4-trisphosphate</KM>
        <Vmax evidence="5">50.6 umol/min/mg enzyme toward 1D-myo-inositol 1,4-bisphosphate</Vmax>
        <Vmax evidence="5">59.7 umol/min/mg enzyme toward 1D-myo-inositol 1D-myo-inositol 1,3,4-trisphosphate</Vmax>
    </kinetics>
</comment>
<comment type="pathway">
    <text evidence="5">Signal transduction; phosphatidylinositol signaling pathway.</text>
</comment>
<comment type="subunit">
    <text evidence="4">Monomer.</text>
</comment>
<comment type="similarity">
    <text evidence="6">Belongs to the inositol monophosphatase superfamily.</text>
</comment>
<organism>
    <name type="scientific">Bos taurus</name>
    <name type="common">Bovine</name>
    <dbReference type="NCBI Taxonomy" id="9913"/>
    <lineage>
        <taxon>Eukaryota</taxon>
        <taxon>Metazoa</taxon>
        <taxon>Chordata</taxon>
        <taxon>Craniata</taxon>
        <taxon>Vertebrata</taxon>
        <taxon>Euteleostomi</taxon>
        <taxon>Mammalia</taxon>
        <taxon>Eutheria</taxon>
        <taxon>Laurasiatheria</taxon>
        <taxon>Artiodactyla</taxon>
        <taxon>Ruminantia</taxon>
        <taxon>Pecora</taxon>
        <taxon>Bovidae</taxon>
        <taxon>Bovinae</taxon>
        <taxon>Bos</taxon>
    </lineage>
</organism>
<feature type="chain" id="PRO_0000142509" description="Inositol polyphosphate 1-phosphatase">
    <location>
        <begin position="1"/>
        <end position="400"/>
    </location>
</feature>
<feature type="region of interest" description="Disordered" evidence="2">
    <location>
        <begin position="238"/>
        <end position="258"/>
    </location>
</feature>
<feature type="compositionally biased region" description="Polar residues" evidence="2">
    <location>
        <begin position="238"/>
        <end position="257"/>
    </location>
</feature>
<feature type="binding site" evidence="7">
    <location>
        <position position="54"/>
    </location>
    <ligand>
        <name>Li(+)</name>
        <dbReference type="ChEBI" id="CHEBI:49713"/>
        <note>inhibitor</note>
    </ligand>
</feature>
<feature type="binding site" evidence="4 9">
    <location>
        <position position="79"/>
    </location>
    <ligand>
        <name>Mg(2+)</name>
        <dbReference type="ChEBI" id="CHEBI:18420"/>
        <label>1</label>
    </ligand>
</feature>
<feature type="binding site" evidence="7">
    <location>
        <position position="80"/>
    </location>
    <ligand>
        <name>Li(+)</name>
        <dbReference type="ChEBI" id="CHEBI:49713"/>
        <note>inhibitor</note>
    </ligand>
</feature>
<feature type="binding site" evidence="4 9">
    <location>
        <position position="153"/>
    </location>
    <ligand>
        <name>Mg(2+)</name>
        <dbReference type="ChEBI" id="CHEBI:18420"/>
        <label>1</label>
    </ligand>
</feature>
<feature type="binding site" evidence="4 9">
    <location>
        <position position="153"/>
    </location>
    <ligand>
        <name>Mg(2+)</name>
        <dbReference type="ChEBI" id="CHEBI:18420"/>
        <label>2</label>
    </ligand>
</feature>
<feature type="binding site" evidence="4 9">
    <location>
        <position position="155"/>
    </location>
    <ligand>
        <name>Mg(2+)</name>
        <dbReference type="ChEBI" id="CHEBI:18420"/>
        <label>1</label>
    </ligand>
</feature>
<feature type="binding site" evidence="3 16">
    <location>
        <position position="156"/>
    </location>
    <ligand>
        <name>1D-myo-inositol 1,4-bisphosphate</name>
        <dbReference type="ChEBI" id="CHEBI:58282"/>
    </ligand>
</feature>
<feature type="binding site" evidence="3 16">
    <location>
        <position position="157"/>
    </location>
    <ligand>
        <name>1D-myo-inositol 1,4-bisphosphate</name>
        <dbReference type="ChEBI" id="CHEBI:58282"/>
    </ligand>
</feature>
<feature type="binding site" evidence="3 16">
    <location>
        <position position="158"/>
    </location>
    <ligand>
        <name>1D-myo-inositol 1,4-bisphosphate</name>
        <dbReference type="ChEBI" id="CHEBI:58282"/>
    </ligand>
</feature>
<feature type="binding site" evidence="3 16">
    <location>
        <position position="268"/>
    </location>
    <ligand>
        <name>1D-myo-inositol 1,4-bisphosphate</name>
        <dbReference type="ChEBI" id="CHEBI:58282"/>
    </ligand>
</feature>
<feature type="binding site" evidence="3 16">
    <location>
        <position position="270"/>
    </location>
    <ligand>
        <name>1D-myo-inositol 1,4-bisphosphate</name>
        <dbReference type="ChEBI" id="CHEBI:58282"/>
    </ligand>
</feature>
<feature type="binding site" evidence="3 16">
    <location>
        <position position="290"/>
    </location>
    <ligand>
        <name>1D-myo-inositol 1,4-bisphosphate</name>
        <dbReference type="ChEBI" id="CHEBI:58282"/>
    </ligand>
</feature>
<feature type="binding site" evidence="3 16">
    <location>
        <position position="291"/>
    </location>
    <ligand>
        <name>1D-myo-inositol 1,4-bisphosphate</name>
        <dbReference type="ChEBI" id="CHEBI:58282"/>
    </ligand>
</feature>
<feature type="binding site" evidence="3 16">
    <location>
        <position position="294"/>
    </location>
    <ligand>
        <name>1D-myo-inositol 1,4-bisphosphate</name>
        <dbReference type="ChEBI" id="CHEBI:58282"/>
    </ligand>
</feature>
<feature type="binding site" evidence="3 16">
    <location>
        <position position="312"/>
    </location>
    <ligand>
        <name>1D-myo-inositol 1,4-bisphosphate</name>
        <dbReference type="ChEBI" id="CHEBI:58282"/>
    </ligand>
</feature>
<feature type="binding site" evidence="4 9">
    <location>
        <position position="317"/>
    </location>
    <ligand>
        <name>Mg(2+)</name>
        <dbReference type="ChEBI" id="CHEBI:18420"/>
        <label>2</label>
    </ligand>
</feature>
<feature type="modified residue" description="Phosphoserine" evidence="1">
    <location>
        <position position="318"/>
    </location>
</feature>
<feature type="mutagenesis site" description="Does not alter affinity for 1D-myo-inositol 1,3,4-trisphosphate. Decreases about 100-fold Li(+) sensitivity. Loss of inositol polyphosphate 1-phosphatase activity." evidence="3">
    <original>D</original>
    <variation>A</variation>
    <location>
        <position position="54"/>
    </location>
</feature>
<feature type="sequence conflict" description="In Ref. 1; AAA30588." evidence="6" ref="1">
    <original>F</original>
    <variation>L</variation>
    <location>
        <position position="84"/>
    </location>
</feature>
<feature type="helix" evidence="17">
    <location>
        <begin position="4"/>
        <end position="24"/>
    </location>
</feature>
<feature type="helix" evidence="17">
    <location>
        <begin position="26"/>
        <end position="29"/>
    </location>
</feature>
<feature type="turn" evidence="17">
    <location>
        <begin position="40"/>
        <end position="43"/>
    </location>
</feature>
<feature type="helix" evidence="17">
    <location>
        <begin position="48"/>
        <end position="68"/>
    </location>
</feature>
<feature type="helix" evidence="17">
    <location>
        <begin position="72"/>
        <end position="75"/>
    </location>
</feature>
<feature type="strand" evidence="17">
    <location>
        <begin position="76"/>
        <end position="80"/>
    </location>
</feature>
<feature type="strand" evidence="17">
    <location>
        <begin position="82"/>
        <end position="85"/>
    </location>
</feature>
<feature type="strand" evidence="17">
    <location>
        <begin position="91"/>
        <end position="93"/>
    </location>
</feature>
<feature type="helix" evidence="17">
    <location>
        <begin position="103"/>
        <end position="110"/>
    </location>
</feature>
<feature type="turn" evidence="17">
    <location>
        <begin position="111"/>
        <end position="113"/>
    </location>
</feature>
<feature type="helix" evidence="17">
    <location>
        <begin position="117"/>
        <end position="125"/>
    </location>
</feature>
<feature type="strand" evidence="17">
    <location>
        <begin position="134"/>
        <end position="138"/>
    </location>
</feature>
<feature type="helix" evidence="17">
    <location>
        <begin position="145"/>
        <end position="147"/>
    </location>
</feature>
<feature type="strand" evidence="17">
    <location>
        <begin position="148"/>
        <end position="156"/>
    </location>
</feature>
<feature type="helix" evidence="17">
    <location>
        <begin position="158"/>
        <end position="163"/>
    </location>
</feature>
<feature type="strand" evidence="17">
    <location>
        <begin position="176"/>
        <end position="178"/>
    </location>
</feature>
<feature type="helix" evidence="17">
    <location>
        <begin position="179"/>
        <end position="181"/>
    </location>
</feature>
<feature type="strand" evidence="17">
    <location>
        <begin position="183"/>
        <end position="190"/>
    </location>
</feature>
<feature type="turn" evidence="17">
    <location>
        <begin position="191"/>
        <end position="193"/>
    </location>
</feature>
<feature type="strand" evidence="17">
    <location>
        <begin position="196"/>
        <end position="208"/>
    </location>
</feature>
<feature type="turn" evidence="17">
    <location>
        <begin position="210"/>
        <end position="212"/>
    </location>
</feature>
<feature type="strand" evidence="17">
    <location>
        <begin position="215"/>
        <end position="230"/>
    </location>
</feature>
<feature type="turn" evidence="17">
    <location>
        <begin position="240"/>
        <end position="242"/>
    </location>
</feature>
<feature type="strand" evidence="17">
    <location>
        <begin position="258"/>
        <end position="261"/>
    </location>
</feature>
<feature type="strand" evidence="17">
    <location>
        <begin position="264"/>
        <end position="267"/>
    </location>
</feature>
<feature type="turn" evidence="17">
    <location>
        <begin position="278"/>
        <end position="281"/>
    </location>
</feature>
<feature type="strand" evidence="17">
    <location>
        <begin position="284"/>
        <end position="287"/>
    </location>
</feature>
<feature type="helix" evidence="17">
    <location>
        <begin position="291"/>
        <end position="299"/>
    </location>
</feature>
<feature type="strand" evidence="17">
    <location>
        <begin position="304"/>
        <end position="308"/>
    </location>
</feature>
<feature type="helix" evidence="17">
    <location>
        <begin position="315"/>
        <end position="326"/>
    </location>
</feature>
<feature type="turn" evidence="17">
    <location>
        <begin position="327"/>
        <end position="329"/>
    </location>
</feature>
<feature type="strand" evidence="17">
    <location>
        <begin position="331"/>
        <end position="334"/>
    </location>
</feature>
<feature type="helix" evidence="17">
    <location>
        <begin position="335"/>
        <end position="340"/>
    </location>
</feature>
<feature type="strand" evidence="18">
    <location>
        <begin position="354"/>
        <end position="356"/>
    </location>
</feature>
<feature type="turn" evidence="17">
    <location>
        <begin position="359"/>
        <end position="364"/>
    </location>
</feature>
<feature type="strand" evidence="17">
    <location>
        <begin position="373"/>
        <end position="377"/>
    </location>
</feature>
<feature type="helix" evidence="17">
    <location>
        <begin position="379"/>
        <end position="385"/>
    </location>
</feature>
<feature type="turn" evidence="17">
    <location>
        <begin position="390"/>
        <end position="392"/>
    </location>
</feature>
<accession>P21327</accession>
<accession>Q1RMJ2</accession>
<evidence type="ECO:0000250" key="1">
    <source>
        <dbReference type="UniProtKB" id="P49441"/>
    </source>
</evidence>
<evidence type="ECO:0000256" key="2">
    <source>
        <dbReference type="SAM" id="MobiDB-lite"/>
    </source>
</evidence>
<evidence type="ECO:0000269" key="3">
    <source>
    </source>
</evidence>
<evidence type="ECO:0000269" key="4">
    <source>
    </source>
</evidence>
<evidence type="ECO:0000269" key="5">
    <source>
    </source>
</evidence>
<evidence type="ECO:0000305" key="6"/>
<evidence type="ECO:0000305" key="7">
    <source>
    </source>
</evidence>
<evidence type="ECO:0000305" key="8">
    <source>
    </source>
</evidence>
<evidence type="ECO:0000312" key="9">
    <source>
        <dbReference type="PDB" id="1INP"/>
    </source>
</evidence>
<evidence type="ECO:0007744" key="10">
    <source>
        <dbReference type="PDB" id="1INP"/>
    </source>
</evidence>
<evidence type="ECO:0007744" key="11">
    <source>
        <dbReference type="PDB" id="6WRO"/>
    </source>
</evidence>
<evidence type="ECO:0007744" key="12">
    <source>
        <dbReference type="PDB" id="6WRR"/>
    </source>
</evidence>
<evidence type="ECO:0007744" key="13">
    <source>
        <dbReference type="PDB" id="6WRY"/>
    </source>
</evidence>
<evidence type="ECO:0007744" key="14">
    <source>
        <dbReference type="PDB" id="6X25"/>
    </source>
</evidence>
<evidence type="ECO:0007744" key="15">
    <source>
        <dbReference type="PDB" id="7KIO"/>
    </source>
</evidence>
<evidence type="ECO:0007744" key="16">
    <source>
        <dbReference type="PDB" id="7KIR"/>
    </source>
</evidence>
<evidence type="ECO:0007829" key="17">
    <source>
        <dbReference type="PDB" id="1INP"/>
    </source>
</evidence>
<evidence type="ECO:0007829" key="18">
    <source>
        <dbReference type="PDB" id="6WRY"/>
    </source>
</evidence>
<protein>
    <recommendedName>
        <fullName evidence="1">Inositol polyphosphate 1-phosphatase</fullName>
        <shortName>IPP</shortName>
        <shortName>IPPase</shortName>
        <ecNumber evidence="5">3.1.3.57</ecNumber>
    </recommendedName>
</protein>
<name>INPP_BOVIN</name>
<gene>
    <name evidence="1" type="primary">INPP1</name>
</gene>
<keyword id="KW-0002">3D-structure</keyword>
<keyword id="KW-0903">Direct protein sequencing</keyword>
<keyword id="KW-0378">Hydrolase</keyword>
<keyword id="KW-0452">Lithium</keyword>
<keyword id="KW-0460">Magnesium</keyword>
<keyword id="KW-0479">Metal-binding</keyword>
<keyword id="KW-0597">Phosphoprotein</keyword>
<keyword id="KW-1185">Reference proteome</keyword>
<sequence>MSDILQELLRVSEKAANIARACRQQETLFQLLIEEKKEGEKNKKFAVDFKTLADVLVQEVIKENMENKFPGLGKKIFGEESNEFTNDLGEKIIMRLGPTEEETVALLSKVLNGNKLASEALAKVVHQDVFFSDPALDSVEINIPQDILGIWVDPIDSTYQYIKGSADITPNQGIFPSGLQCVTVLIGVYDIQTGVPLMGVINQPFVSQDLHTRRWKGQCYWGLSYLGTNIHSLLPPVSTRSNSEAQSQGTQNPSSEGSCRFSVVISTSEKETIKGALSHVCGERIFRAAGAGYKSLCVILGLADIYIFSEDTTFKWDSCAAHAILRAMGGGMVDLKECLERNPDTGLDLPQLVYHVGNEGAAGVDQWANKGGLIAYRSEKQLETFLSRLLQHLAPVATHT</sequence>
<dbReference type="EC" id="3.1.3.57" evidence="5"/>
<dbReference type="EMBL" id="M55916">
    <property type="protein sequence ID" value="AAA30588.1"/>
    <property type="molecule type" value="mRNA"/>
</dbReference>
<dbReference type="EMBL" id="BC114863">
    <property type="protein sequence ID" value="AAI14864.1"/>
    <property type="molecule type" value="mRNA"/>
</dbReference>
<dbReference type="PIR" id="A39254">
    <property type="entry name" value="A39254"/>
</dbReference>
<dbReference type="RefSeq" id="NP_776789.1">
    <property type="nucleotide sequence ID" value="NM_174364.2"/>
</dbReference>
<dbReference type="RefSeq" id="XP_005202248.1">
    <property type="nucleotide sequence ID" value="XM_005202191.5"/>
</dbReference>
<dbReference type="RefSeq" id="XP_005202249.1">
    <property type="nucleotide sequence ID" value="XM_005202192.4"/>
</dbReference>
<dbReference type="RefSeq" id="XP_010800089.1">
    <property type="nucleotide sequence ID" value="XM_010801787.2"/>
</dbReference>
<dbReference type="RefSeq" id="XP_010800090.1">
    <property type="nucleotide sequence ID" value="XM_010801788.2"/>
</dbReference>
<dbReference type="RefSeq" id="XP_010800091.1">
    <property type="nucleotide sequence ID" value="XM_010801789.2"/>
</dbReference>
<dbReference type="RefSeq" id="XP_010800092.1">
    <property type="nucleotide sequence ID" value="XM_010801790.4"/>
</dbReference>
<dbReference type="RefSeq" id="XP_024854514.1">
    <property type="nucleotide sequence ID" value="XM_024998746.2"/>
</dbReference>
<dbReference type="RefSeq" id="XP_059747643.1">
    <property type="nucleotide sequence ID" value="XM_059891660.1"/>
</dbReference>
<dbReference type="PDB" id="1INP">
    <property type="method" value="X-ray"/>
    <property type="resolution" value="2.30 A"/>
    <property type="chains" value="A=1-400"/>
</dbReference>
<dbReference type="PDB" id="6WRO">
    <property type="method" value="X-ray"/>
    <property type="resolution" value="3.00 A"/>
    <property type="chains" value="A=1-400"/>
</dbReference>
<dbReference type="PDB" id="6WRR">
    <property type="method" value="X-ray"/>
    <property type="resolution" value="2.50 A"/>
    <property type="chains" value="A=1-400"/>
</dbReference>
<dbReference type="PDB" id="6WRY">
    <property type="method" value="X-ray"/>
    <property type="resolution" value="2.80 A"/>
    <property type="chains" value="A=2-389"/>
</dbReference>
<dbReference type="PDB" id="6X25">
    <property type="method" value="X-ray"/>
    <property type="resolution" value="3.20 A"/>
    <property type="chains" value="A=1-400"/>
</dbReference>
<dbReference type="PDB" id="7KIO">
    <property type="method" value="X-ray"/>
    <property type="resolution" value="2.40 A"/>
    <property type="chains" value="A=1-400"/>
</dbReference>
<dbReference type="PDB" id="7KIR">
    <property type="method" value="X-ray"/>
    <property type="resolution" value="2.60 A"/>
    <property type="chains" value="A=1-400"/>
</dbReference>
<dbReference type="PDBsum" id="1INP"/>
<dbReference type="PDBsum" id="6WRO"/>
<dbReference type="PDBsum" id="6WRR"/>
<dbReference type="PDBsum" id="6WRY"/>
<dbReference type="PDBsum" id="6X25"/>
<dbReference type="PDBsum" id="7KIO"/>
<dbReference type="PDBsum" id="7KIR"/>
<dbReference type="SMR" id="P21327"/>
<dbReference type="FunCoup" id="P21327">
    <property type="interactions" value="790"/>
</dbReference>
<dbReference type="STRING" id="9913.ENSBTAP00000070119"/>
<dbReference type="PaxDb" id="9913-ENSBTAP00000009977"/>
<dbReference type="PeptideAtlas" id="P21327"/>
<dbReference type="Ensembl" id="ENSBTAT00000009977.5">
    <property type="protein sequence ID" value="ENSBTAP00000009977.4"/>
    <property type="gene ID" value="ENSBTAG00000007584.6"/>
</dbReference>
<dbReference type="GeneID" id="281869"/>
<dbReference type="KEGG" id="bta:281869"/>
<dbReference type="CTD" id="3628"/>
<dbReference type="VEuPathDB" id="HostDB:ENSBTAG00000007584"/>
<dbReference type="VGNC" id="VGNC:30208">
    <property type="gene designation" value="INPP1"/>
</dbReference>
<dbReference type="eggNOG" id="KOG3099">
    <property type="taxonomic scope" value="Eukaryota"/>
</dbReference>
<dbReference type="GeneTree" id="ENSGT00940000156785"/>
<dbReference type="HOGENOM" id="CLU_043868_2_0_1"/>
<dbReference type="InParanoid" id="P21327"/>
<dbReference type="OMA" id="KGSTFRW"/>
<dbReference type="OrthoDB" id="9977309at2759"/>
<dbReference type="TreeFam" id="TF314300"/>
<dbReference type="Reactome" id="R-BTA-1855183">
    <property type="pathway name" value="Synthesis of IP2, IP, and Ins in the cytosol"/>
</dbReference>
<dbReference type="SABIO-RK" id="P21327"/>
<dbReference type="UniPathway" id="UPA00944"/>
<dbReference type="EvolutionaryTrace" id="P21327"/>
<dbReference type="Proteomes" id="UP000009136">
    <property type="component" value="Chromosome 2"/>
</dbReference>
<dbReference type="Bgee" id="ENSBTAG00000007584">
    <property type="expression patterns" value="Expressed in oocyte and 103 other cell types or tissues"/>
</dbReference>
<dbReference type="GO" id="GO:0052829">
    <property type="term" value="F:inositol-1,3,4-trisphosphate 1-phosphatase activity"/>
    <property type="evidence" value="ECO:0000314"/>
    <property type="project" value="UniProtKB"/>
</dbReference>
<dbReference type="GO" id="GO:0004441">
    <property type="term" value="F:inositol-1,4-bisphosphate 1-phosphatase activity"/>
    <property type="evidence" value="ECO:0000314"/>
    <property type="project" value="UniProtKB"/>
</dbReference>
<dbReference type="GO" id="GO:0046872">
    <property type="term" value="F:metal ion binding"/>
    <property type="evidence" value="ECO:0007669"/>
    <property type="project" value="UniProtKB-KW"/>
</dbReference>
<dbReference type="GO" id="GO:0046854">
    <property type="term" value="P:phosphatidylinositol phosphate biosynthetic process"/>
    <property type="evidence" value="ECO:0007669"/>
    <property type="project" value="InterPro"/>
</dbReference>
<dbReference type="CDD" id="cd01640">
    <property type="entry name" value="IPPase"/>
    <property type="match status" value="1"/>
</dbReference>
<dbReference type="FunFam" id="3.40.190.80:FF:000015">
    <property type="entry name" value="Inositol polyphosphate 1-phosphatase"/>
    <property type="match status" value="1"/>
</dbReference>
<dbReference type="FunFam" id="4.10.460.10:FF:000001">
    <property type="entry name" value="Inositol polyphosphate 1-phosphatase"/>
    <property type="match status" value="1"/>
</dbReference>
<dbReference type="Gene3D" id="3.40.190.80">
    <property type="match status" value="1"/>
</dbReference>
<dbReference type="Gene3D" id="3.30.540.10">
    <property type="entry name" value="Fructose-1,6-Bisphosphatase, subunit A, domain 1"/>
    <property type="match status" value="1"/>
</dbReference>
<dbReference type="Gene3D" id="4.10.460.10">
    <property type="entry name" value="Inositol Polyphosphate 1-phosphatase, domain 1"/>
    <property type="match status" value="1"/>
</dbReference>
<dbReference type="InterPro" id="IPR050725">
    <property type="entry name" value="CysQ/Inositol_MonoPase"/>
</dbReference>
<dbReference type="InterPro" id="IPR020583">
    <property type="entry name" value="Inositol_monoP_metal-BS"/>
</dbReference>
<dbReference type="InterPro" id="IPR000760">
    <property type="entry name" value="Inositol_monophosphatase-like"/>
</dbReference>
<dbReference type="InterPro" id="IPR020550">
    <property type="entry name" value="Inositol_monophosphatase_CS"/>
</dbReference>
<dbReference type="InterPro" id="IPR044897">
    <property type="entry name" value="INPP1_dom_1"/>
</dbReference>
<dbReference type="PANTHER" id="PTHR43028">
    <property type="entry name" value="3'(2'),5'-BISPHOSPHATE NUCLEOTIDASE 1"/>
    <property type="match status" value="1"/>
</dbReference>
<dbReference type="PANTHER" id="PTHR43028:SF3">
    <property type="entry name" value="INOSITOL POLYPHOSPHATE 1-PHOSPHATASE"/>
    <property type="match status" value="1"/>
</dbReference>
<dbReference type="Pfam" id="PF00459">
    <property type="entry name" value="Inositol_P"/>
    <property type="match status" value="1"/>
</dbReference>
<dbReference type="SUPFAM" id="SSF56655">
    <property type="entry name" value="Carbohydrate phosphatase"/>
    <property type="match status" value="1"/>
</dbReference>
<dbReference type="PROSITE" id="PS00629">
    <property type="entry name" value="IMP_1"/>
    <property type="match status" value="1"/>
</dbReference>
<dbReference type="PROSITE" id="PS00630">
    <property type="entry name" value="IMP_2"/>
    <property type="match status" value="1"/>
</dbReference>
<reference key="1">
    <citation type="journal article" date="1990" name="Proc. Natl. Acad. Sci. U.S.A.">
        <title>Isolation and heterologous expression of a cDNA encoding bovine inositol polyphosphate 1-phosphatase.</title>
        <authorList>
            <person name="York J.D."/>
            <person name="Majerus P.W."/>
        </authorList>
    </citation>
    <scope>NUCLEOTIDE SEQUENCE [MRNA]</scope>
    <scope>PARTIAL PROTEIN SEQUENCE</scope>
    <source>
        <tissue>Brain</tissue>
    </source>
</reference>
<reference key="2">
    <citation type="submission" date="2006-04" db="EMBL/GenBank/DDBJ databases">
        <authorList>
            <consortium name="NIH - Mammalian Gene Collection (MGC) project"/>
        </authorList>
    </citation>
    <scope>NUCLEOTIDE SEQUENCE [LARGE SCALE MRNA]</scope>
    <source>
        <strain>Hereford</strain>
        <tissue>Thymus</tissue>
    </source>
</reference>
<reference key="3">
    <citation type="journal article" date="1994" name="J. Mol. Biol.">
        <title>Crystallization and initial X-ray crystallographic characterization of recombinant bovine inositol polyphosphate 1-phosphatase produced in Spodoptera frugiperda cells.</title>
        <authorList>
            <person name="York J.D."/>
            <person name="Chen Z.W."/>
            <person name="Ponder J.W."/>
            <person name="Chauhan A.K."/>
            <person name="Mathews F.S."/>
            <person name="Majerus P.W."/>
        </authorList>
    </citation>
    <scope>FUNCTION</scope>
    <scope>CATALYTIC ACTIVITY</scope>
    <scope>BIOPHYSICOCHEMICAL PROPERTIES</scope>
    <scope>PATHWAY</scope>
</reference>
<reference evidence="10" key="4">
    <citation type="journal article" date="1994" name="Biochemistry">
        <title>Crystal structure of inositol polyphosphate 1-phosphatase at 2.3-A resolution.</title>
        <authorList>
            <person name="York J.D."/>
            <person name="Ponder J.W."/>
            <person name="Chen Z.-W."/>
            <person name="Mathews F.S."/>
            <person name="Majerus P.W."/>
        </authorList>
    </citation>
    <scope>X-RAY CRYSTALLOGRAPHY (2.3 ANGSTROMS) IN COMPLEX WITH MAGNESIUM IONS</scope>
    <scope>COFACTOR</scope>
</reference>
<reference evidence="11 12 13 14 15 16" key="5">
    <citation type="journal article" date="2021" name="J. Biol. Chem.">
        <title>A structural basis for lithium and substrate binding of an inositide phosphatase.</title>
        <authorList>
            <person name="Dollins D.E."/>
            <person name="Xiong J.P."/>
            <person name="Endo-Streeter S."/>
            <person name="Anderson D.E."/>
            <person name="Bansal V.S."/>
            <person name="Ponder J.W."/>
            <person name="Ren Y."/>
            <person name="York J.D."/>
        </authorList>
    </citation>
    <scope>X-RAY CRYSTALLOGRAPHY (2.40 ANGSTROMS) IN COMPLEX WITH 1D-MYO-INOSITOL 1,4-BISPHOSPHATE</scope>
    <scope>MUTAGENESIS OF ASP-54</scope>
    <scope>ACTIVITY REGULATION</scope>
    <scope>LITHIUM BINDING</scope>
</reference>
<proteinExistence type="evidence at protein level"/>